<proteinExistence type="inferred from homology"/>
<keyword id="KW-1185">Reference proteome</keyword>
<keyword id="KW-0687">Ribonucleoprotein</keyword>
<keyword id="KW-0689">Ribosomal protein</keyword>
<keyword id="KW-0694">RNA-binding</keyword>
<keyword id="KW-0699">rRNA-binding</keyword>
<organism>
    <name type="scientific">Alcanivorax borkumensis (strain ATCC 700651 / DSM 11573 / NCIMB 13689 / SK2)</name>
    <dbReference type="NCBI Taxonomy" id="393595"/>
    <lineage>
        <taxon>Bacteria</taxon>
        <taxon>Pseudomonadati</taxon>
        <taxon>Pseudomonadota</taxon>
        <taxon>Gammaproteobacteria</taxon>
        <taxon>Oceanospirillales</taxon>
        <taxon>Alcanivoracaceae</taxon>
        <taxon>Alcanivorax</taxon>
    </lineage>
</organism>
<evidence type="ECO:0000255" key="1">
    <source>
        <dbReference type="HAMAP-Rule" id="MF_01365"/>
    </source>
</evidence>
<evidence type="ECO:0000256" key="2">
    <source>
        <dbReference type="SAM" id="MobiDB-lite"/>
    </source>
</evidence>
<evidence type="ECO:0000305" key="3"/>
<feature type="chain" id="PRO_0000260834" description="Large ribosomal subunit protein uL6">
    <location>
        <begin position="1"/>
        <end position="177"/>
    </location>
</feature>
<feature type="region of interest" description="Disordered" evidence="2">
    <location>
        <begin position="154"/>
        <end position="177"/>
    </location>
</feature>
<feature type="compositionally biased region" description="Basic and acidic residues" evidence="2">
    <location>
        <begin position="155"/>
        <end position="171"/>
    </location>
</feature>
<protein>
    <recommendedName>
        <fullName evidence="1">Large ribosomal subunit protein uL6</fullName>
    </recommendedName>
    <alternativeName>
        <fullName evidence="3">50S ribosomal protein L6</fullName>
    </alternativeName>
</protein>
<gene>
    <name evidence="1" type="primary">rplF</name>
    <name type="ordered locus">ABO_0412</name>
</gene>
<sequence length="177" mass="19100">MSRVAKSPVNLPKGVEVKIDGQKVAVKGGKGSLEHEVHELVAVSLEDGVVSVKPHDDSQKGWALAGTTRALLNNMVTGVADGFERKLQLLGVGYRAQAQGKVLNLTLGFSHPVAYQLPEGITVETPSQTEIVIKGIDKQLVGQVAANVRAFRPPEPYKGKGVRYADEQVRRKEAKKK</sequence>
<accession>Q0VSI8</accession>
<dbReference type="EMBL" id="AM286690">
    <property type="protein sequence ID" value="CAL15860.1"/>
    <property type="molecule type" value="Genomic_DNA"/>
</dbReference>
<dbReference type="RefSeq" id="WP_011587700.1">
    <property type="nucleotide sequence ID" value="NC_008260.1"/>
</dbReference>
<dbReference type="SMR" id="Q0VSI8"/>
<dbReference type="STRING" id="393595.ABO_0412"/>
<dbReference type="KEGG" id="abo:ABO_0412"/>
<dbReference type="eggNOG" id="COG0097">
    <property type="taxonomic scope" value="Bacteria"/>
</dbReference>
<dbReference type="HOGENOM" id="CLU_065464_1_2_6"/>
<dbReference type="OrthoDB" id="9805007at2"/>
<dbReference type="Proteomes" id="UP000008871">
    <property type="component" value="Chromosome"/>
</dbReference>
<dbReference type="GO" id="GO:0022625">
    <property type="term" value="C:cytosolic large ribosomal subunit"/>
    <property type="evidence" value="ECO:0007669"/>
    <property type="project" value="TreeGrafter"/>
</dbReference>
<dbReference type="GO" id="GO:0019843">
    <property type="term" value="F:rRNA binding"/>
    <property type="evidence" value="ECO:0007669"/>
    <property type="project" value="UniProtKB-UniRule"/>
</dbReference>
<dbReference type="GO" id="GO:0003735">
    <property type="term" value="F:structural constituent of ribosome"/>
    <property type="evidence" value="ECO:0007669"/>
    <property type="project" value="InterPro"/>
</dbReference>
<dbReference type="GO" id="GO:0002181">
    <property type="term" value="P:cytoplasmic translation"/>
    <property type="evidence" value="ECO:0007669"/>
    <property type="project" value="TreeGrafter"/>
</dbReference>
<dbReference type="FunFam" id="3.90.930.12:FF:000001">
    <property type="entry name" value="50S ribosomal protein L6"/>
    <property type="match status" value="1"/>
</dbReference>
<dbReference type="FunFam" id="3.90.930.12:FF:000002">
    <property type="entry name" value="50S ribosomal protein L6"/>
    <property type="match status" value="1"/>
</dbReference>
<dbReference type="Gene3D" id="3.90.930.12">
    <property type="entry name" value="Ribosomal protein L6, alpha-beta domain"/>
    <property type="match status" value="2"/>
</dbReference>
<dbReference type="HAMAP" id="MF_01365_B">
    <property type="entry name" value="Ribosomal_uL6_B"/>
    <property type="match status" value="1"/>
</dbReference>
<dbReference type="InterPro" id="IPR000702">
    <property type="entry name" value="Ribosomal_uL6-like"/>
</dbReference>
<dbReference type="InterPro" id="IPR036789">
    <property type="entry name" value="Ribosomal_uL6-like_a/b-dom_sf"/>
</dbReference>
<dbReference type="InterPro" id="IPR020040">
    <property type="entry name" value="Ribosomal_uL6_a/b-dom"/>
</dbReference>
<dbReference type="InterPro" id="IPR019906">
    <property type="entry name" value="Ribosomal_uL6_bac-type"/>
</dbReference>
<dbReference type="InterPro" id="IPR002358">
    <property type="entry name" value="Ribosomal_uL6_CS"/>
</dbReference>
<dbReference type="NCBIfam" id="TIGR03654">
    <property type="entry name" value="L6_bact"/>
    <property type="match status" value="1"/>
</dbReference>
<dbReference type="PANTHER" id="PTHR11655">
    <property type="entry name" value="60S/50S RIBOSOMAL PROTEIN L6/L9"/>
    <property type="match status" value="1"/>
</dbReference>
<dbReference type="PANTHER" id="PTHR11655:SF14">
    <property type="entry name" value="LARGE RIBOSOMAL SUBUNIT PROTEIN UL6M"/>
    <property type="match status" value="1"/>
</dbReference>
<dbReference type="Pfam" id="PF00347">
    <property type="entry name" value="Ribosomal_L6"/>
    <property type="match status" value="2"/>
</dbReference>
<dbReference type="PIRSF" id="PIRSF002162">
    <property type="entry name" value="Ribosomal_L6"/>
    <property type="match status" value="1"/>
</dbReference>
<dbReference type="PRINTS" id="PR00059">
    <property type="entry name" value="RIBOSOMALL6"/>
</dbReference>
<dbReference type="SUPFAM" id="SSF56053">
    <property type="entry name" value="Ribosomal protein L6"/>
    <property type="match status" value="2"/>
</dbReference>
<dbReference type="PROSITE" id="PS00525">
    <property type="entry name" value="RIBOSOMAL_L6_1"/>
    <property type="match status" value="1"/>
</dbReference>
<reference key="1">
    <citation type="journal article" date="2006" name="Nat. Biotechnol.">
        <title>Genome sequence of the ubiquitous hydrocarbon-degrading marine bacterium Alcanivorax borkumensis.</title>
        <authorList>
            <person name="Schneiker S."/>
            <person name="Martins dos Santos V.A.P."/>
            <person name="Bartels D."/>
            <person name="Bekel T."/>
            <person name="Brecht M."/>
            <person name="Buhrmester J."/>
            <person name="Chernikova T.N."/>
            <person name="Denaro R."/>
            <person name="Ferrer M."/>
            <person name="Gertler C."/>
            <person name="Goesmann A."/>
            <person name="Golyshina O.V."/>
            <person name="Kaminski F."/>
            <person name="Khachane A.N."/>
            <person name="Lang S."/>
            <person name="Linke B."/>
            <person name="McHardy A.C."/>
            <person name="Meyer F."/>
            <person name="Nechitaylo T."/>
            <person name="Puehler A."/>
            <person name="Regenhardt D."/>
            <person name="Rupp O."/>
            <person name="Sabirova J.S."/>
            <person name="Selbitschka W."/>
            <person name="Yakimov M.M."/>
            <person name="Timmis K.N."/>
            <person name="Vorhoelter F.-J."/>
            <person name="Weidner S."/>
            <person name="Kaiser O."/>
            <person name="Golyshin P.N."/>
        </authorList>
    </citation>
    <scope>NUCLEOTIDE SEQUENCE [LARGE SCALE GENOMIC DNA]</scope>
    <source>
        <strain>ATCC 700651 / DSM 11573 / NCIMB 13689 / SK2</strain>
    </source>
</reference>
<name>RL6_ALCBS</name>
<comment type="function">
    <text evidence="1">This protein binds to the 23S rRNA, and is important in its secondary structure. It is located near the subunit interface in the base of the L7/L12 stalk, and near the tRNA binding site of the peptidyltransferase center.</text>
</comment>
<comment type="subunit">
    <text evidence="1">Part of the 50S ribosomal subunit.</text>
</comment>
<comment type="similarity">
    <text evidence="1">Belongs to the universal ribosomal protein uL6 family.</text>
</comment>